<protein>
    <recommendedName>
        <fullName>Peroxidase 28</fullName>
        <shortName>Atperox P28</shortName>
        <ecNumber>1.11.1.7</ecNumber>
    </recommendedName>
    <alternativeName>
        <fullName>ATP39</fullName>
    </alternativeName>
</protein>
<keyword id="KW-0106">Calcium</keyword>
<keyword id="KW-1015">Disulfide bond</keyword>
<keyword id="KW-0349">Heme</keyword>
<keyword id="KW-0376">Hydrogen peroxide</keyword>
<keyword id="KW-0408">Iron</keyword>
<keyword id="KW-0479">Metal-binding</keyword>
<keyword id="KW-0560">Oxidoreductase</keyword>
<keyword id="KW-0575">Peroxidase</keyword>
<keyword id="KW-1185">Reference proteome</keyword>
<keyword id="KW-0964">Secreted</keyword>
<keyword id="KW-0732">Signal</keyword>
<feature type="signal peptide" evidence="1">
    <location>
        <begin position="1"/>
        <end position="21"/>
    </location>
</feature>
<feature type="chain" id="PRO_0000023694" description="Peroxidase 28">
    <location>
        <begin position="22"/>
        <end position="321"/>
    </location>
</feature>
<feature type="active site" description="Proton acceptor">
    <location>
        <position position="63"/>
    </location>
</feature>
<feature type="binding site" evidence="2">
    <location>
        <position position="64"/>
    </location>
    <ligand>
        <name>Ca(2+)</name>
        <dbReference type="ChEBI" id="CHEBI:29108"/>
        <label>1</label>
    </ligand>
</feature>
<feature type="binding site" evidence="2">
    <location>
        <position position="67"/>
    </location>
    <ligand>
        <name>Ca(2+)</name>
        <dbReference type="ChEBI" id="CHEBI:29108"/>
        <label>1</label>
    </ligand>
</feature>
<feature type="binding site" evidence="2">
    <location>
        <position position="69"/>
    </location>
    <ligand>
        <name>Ca(2+)</name>
        <dbReference type="ChEBI" id="CHEBI:29108"/>
        <label>1</label>
    </ligand>
</feature>
<feature type="binding site" evidence="2">
    <location>
        <position position="71"/>
    </location>
    <ligand>
        <name>Ca(2+)</name>
        <dbReference type="ChEBI" id="CHEBI:29108"/>
        <label>1</label>
    </ligand>
</feature>
<feature type="binding site" evidence="2">
    <location>
        <position position="73"/>
    </location>
    <ligand>
        <name>Ca(2+)</name>
        <dbReference type="ChEBI" id="CHEBI:29108"/>
        <label>1</label>
    </ligand>
</feature>
<feature type="binding site" evidence="2">
    <location>
        <position position="159"/>
    </location>
    <ligand>
        <name>substrate</name>
    </ligand>
</feature>
<feature type="binding site" description="axial binding residue" evidence="2">
    <location>
        <position position="189"/>
    </location>
    <ligand>
        <name>heme b</name>
        <dbReference type="ChEBI" id="CHEBI:60344"/>
    </ligand>
    <ligandPart>
        <name>Fe</name>
        <dbReference type="ChEBI" id="CHEBI:18248"/>
    </ligandPart>
</feature>
<feature type="binding site" evidence="2">
    <location>
        <position position="190"/>
    </location>
    <ligand>
        <name>Ca(2+)</name>
        <dbReference type="ChEBI" id="CHEBI:29108"/>
        <label>2</label>
    </ligand>
</feature>
<feature type="binding site" evidence="2">
    <location>
        <position position="238"/>
    </location>
    <ligand>
        <name>Ca(2+)</name>
        <dbReference type="ChEBI" id="CHEBI:29108"/>
        <label>2</label>
    </ligand>
</feature>
<feature type="binding site" evidence="2">
    <location>
        <position position="244"/>
    </location>
    <ligand>
        <name>Ca(2+)</name>
        <dbReference type="ChEBI" id="CHEBI:29108"/>
        <label>2</label>
    </ligand>
</feature>
<feature type="binding site" evidence="2">
    <location>
        <position position="249"/>
    </location>
    <ligand>
        <name>Ca(2+)</name>
        <dbReference type="ChEBI" id="CHEBI:29108"/>
        <label>2</label>
    </ligand>
</feature>
<feature type="site" description="Transition state stabilizer" evidence="2">
    <location>
        <position position="59"/>
    </location>
</feature>
<feature type="disulfide bond" evidence="2">
    <location>
        <begin position="32"/>
        <end position="111"/>
    </location>
</feature>
<feature type="disulfide bond" evidence="2">
    <location>
        <begin position="65"/>
        <end position="70"/>
    </location>
</feature>
<feature type="disulfide bond" evidence="2">
    <location>
        <begin position="117"/>
        <end position="317"/>
    </location>
</feature>
<feature type="disulfide bond" evidence="2">
    <location>
        <begin position="196"/>
        <end position="228"/>
    </location>
</feature>
<feature type="sequence conflict" description="In Ref. 3; AAM65659." evidence="3" ref="3">
    <original>T</original>
    <variation>K</variation>
    <location>
        <position position="5"/>
    </location>
</feature>
<dbReference type="EC" id="1.11.1.7"/>
<dbReference type="EMBL" id="AC009327">
    <property type="protein sequence ID" value="AAF03466.1"/>
    <property type="molecule type" value="Genomic_DNA"/>
</dbReference>
<dbReference type="EMBL" id="CP002686">
    <property type="protein sequence ID" value="AEE73970.1"/>
    <property type="molecule type" value="Genomic_DNA"/>
</dbReference>
<dbReference type="EMBL" id="AY088113">
    <property type="protein sequence ID" value="AAM65659.1"/>
    <property type="molecule type" value="mRNA"/>
</dbReference>
<dbReference type="RefSeq" id="NP_187017.1">
    <property type="nucleotide sequence ID" value="NM_111238.3"/>
</dbReference>
<dbReference type="SMR" id="Q9SS67"/>
<dbReference type="FunCoup" id="Q9SS67">
    <property type="interactions" value="255"/>
</dbReference>
<dbReference type="STRING" id="3702.Q9SS67"/>
<dbReference type="PeroxiBase" id="121">
    <property type="entry name" value="AtPrx28"/>
</dbReference>
<dbReference type="GlyGen" id="Q9SS67">
    <property type="glycosylation" value="1 site"/>
</dbReference>
<dbReference type="PaxDb" id="3702-AT3G03670.1"/>
<dbReference type="ProteomicsDB" id="236780"/>
<dbReference type="EnsemblPlants" id="AT3G03670.1">
    <property type="protein sequence ID" value="AT3G03670.1"/>
    <property type="gene ID" value="AT3G03670"/>
</dbReference>
<dbReference type="GeneID" id="821193"/>
<dbReference type="Gramene" id="AT3G03670.1">
    <property type="protein sequence ID" value="AT3G03670.1"/>
    <property type="gene ID" value="AT3G03670"/>
</dbReference>
<dbReference type="KEGG" id="ath:AT3G03670"/>
<dbReference type="Araport" id="AT3G03670"/>
<dbReference type="TAIR" id="AT3G03670"/>
<dbReference type="eggNOG" id="ENOG502QPI1">
    <property type="taxonomic scope" value="Eukaryota"/>
</dbReference>
<dbReference type="HOGENOM" id="CLU_010543_0_1_1"/>
<dbReference type="InParanoid" id="Q9SS67"/>
<dbReference type="OMA" id="REAGPNK"/>
<dbReference type="OrthoDB" id="2113341at2759"/>
<dbReference type="PhylomeDB" id="Q9SS67"/>
<dbReference type="BioCyc" id="ARA:AT3G03670-MONOMER"/>
<dbReference type="PRO" id="PR:Q9SS67"/>
<dbReference type="Proteomes" id="UP000006548">
    <property type="component" value="Chromosome 3"/>
</dbReference>
<dbReference type="ExpressionAtlas" id="Q9SS67">
    <property type="expression patterns" value="baseline and differential"/>
</dbReference>
<dbReference type="GO" id="GO:0005576">
    <property type="term" value="C:extracellular region"/>
    <property type="evidence" value="ECO:0007669"/>
    <property type="project" value="UniProtKB-SubCell"/>
</dbReference>
<dbReference type="GO" id="GO:0020037">
    <property type="term" value="F:heme binding"/>
    <property type="evidence" value="ECO:0007669"/>
    <property type="project" value="InterPro"/>
</dbReference>
<dbReference type="GO" id="GO:0140825">
    <property type="term" value="F:lactoperoxidase activity"/>
    <property type="evidence" value="ECO:0007669"/>
    <property type="project" value="UniProtKB-EC"/>
</dbReference>
<dbReference type="GO" id="GO:0046872">
    <property type="term" value="F:metal ion binding"/>
    <property type="evidence" value="ECO:0007669"/>
    <property type="project" value="UniProtKB-KW"/>
</dbReference>
<dbReference type="GO" id="GO:0071456">
    <property type="term" value="P:cellular response to hypoxia"/>
    <property type="evidence" value="ECO:0000270"/>
    <property type="project" value="TAIR"/>
</dbReference>
<dbReference type="GO" id="GO:0042744">
    <property type="term" value="P:hydrogen peroxide catabolic process"/>
    <property type="evidence" value="ECO:0007669"/>
    <property type="project" value="UniProtKB-KW"/>
</dbReference>
<dbReference type="GO" id="GO:0006979">
    <property type="term" value="P:response to oxidative stress"/>
    <property type="evidence" value="ECO:0007669"/>
    <property type="project" value="InterPro"/>
</dbReference>
<dbReference type="CDD" id="cd00693">
    <property type="entry name" value="secretory_peroxidase"/>
    <property type="match status" value="1"/>
</dbReference>
<dbReference type="FunFam" id="1.10.420.10:FF:000007">
    <property type="entry name" value="Peroxidase"/>
    <property type="match status" value="1"/>
</dbReference>
<dbReference type="FunFam" id="1.10.520.10:FF:000001">
    <property type="entry name" value="Peroxidase"/>
    <property type="match status" value="1"/>
</dbReference>
<dbReference type="Gene3D" id="1.10.520.10">
    <property type="match status" value="1"/>
</dbReference>
<dbReference type="Gene3D" id="1.10.420.10">
    <property type="entry name" value="Peroxidase, domain 2"/>
    <property type="match status" value="1"/>
</dbReference>
<dbReference type="InterPro" id="IPR002016">
    <property type="entry name" value="Haem_peroxidase"/>
</dbReference>
<dbReference type="InterPro" id="IPR010255">
    <property type="entry name" value="Haem_peroxidase_sf"/>
</dbReference>
<dbReference type="InterPro" id="IPR000823">
    <property type="entry name" value="Peroxidase_pln"/>
</dbReference>
<dbReference type="InterPro" id="IPR033905">
    <property type="entry name" value="Secretory_peroxidase"/>
</dbReference>
<dbReference type="PANTHER" id="PTHR31517">
    <property type="match status" value="1"/>
</dbReference>
<dbReference type="PANTHER" id="PTHR31517:SF59">
    <property type="entry name" value="PEROXIDASE"/>
    <property type="match status" value="1"/>
</dbReference>
<dbReference type="Pfam" id="PF00141">
    <property type="entry name" value="peroxidase"/>
    <property type="match status" value="1"/>
</dbReference>
<dbReference type="PRINTS" id="PR00458">
    <property type="entry name" value="PEROXIDASE"/>
</dbReference>
<dbReference type="PRINTS" id="PR00461">
    <property type="entry name" value="PLPEROXIDASE"/>
</dbReference>
<dbReference type="SUPFAM" id="SSF48113">
    <property type="entry name" value="Heme-dependent peroxidases"/>
    <property type="match status" value="1"/>
</dbReference>
<dbReference type="PROSITE" id="PS50873">
    <property type="entry name" value="PEROXIDASE_4"/>
    <property type="match status" value="1"/>
</dbReference>
<organism>
    <name type="scientific">Arabidopsis thaliana</name>
    <name type="common">Mouse-ear cress</name>
    <dbReference type="NCBI Taxonomy" id="3702"/>
    <lineage>
        <taxon>Eukaryota</taxon>
        <taxon>Viridiplantae</taxon>
        <taxon>Streptophyta</taxon>
        <taxon>Embryophyta</taxon>
        <taxon>Tracheophyta</taxon>
        <taxon>Spermatophyta</taxon>
        <taxon>Magnoliopsida</taxon>
        <taxon>eudicotyledons</taxon>
        <taxon>Gunneridae</taxon>
        <taxon>Pentapetalae</taxon>
        <taxon>rosids</taxon>
        <taxon>malvids</taxon>
        <taxon>Brassicales</taxon>
        <taxon>Brassicaceae</taxon>
        <taxon>Camelineae</taxon>
        <taxon>Arabidopsis</taxon>
    </lineage>
</organism>
<name>PER28_ARATH</name>
<accession>Q9SS67</accession>
<reference key="1">
    <citation type="journal article" date="2000" name="Nature">
        <title>Sequence and analysis of chromosome 3 of the plant Arabidopsis thaliana.</title>
        <authorList>
            <person name="Salanoubat M."/>
            <person name="Lemcke K."/>
            <person name="Rieger M."/>
            <person name="Ansorge W."/>
            <person name="Unseld M."/>
            <person name="Fartmann B."/>
            <person name="Valle G."/>
            <person name="Bloecker H."/>
            <person name="Perez-Alonso M."/>
            <person name="Obermaier B."/>
            <person name="Delseny M."/>
            <person name="Boutry M."/>
            <person name="Grivell L.A."/>
            <person name="Mache R."/>
            <person name="Puigdomenech P."/>
            <person name="De Simone V."/>
            <person name="Choisne N."/>
            <person name="Artiguenave F."/>
            <person name="Robert C."/>
            <person name="Brottier P."/>
            <person name="Wincker P."/>
            <person name="Cattolico L."/>
            <person name="Weissenbach J."/>
            <person name="Saurin W."/>
            <person name="Quetier F."/>
            <person name="Schaefer M."/>
            <person name="Mueller-Auer S."/>
            <person name="Gabel C."/>
            <person name="Fuchs M."/>
            <person name="Benes V."/>
            <person name="Wurmbach E."/>
            <person name="Drzonek H."/>
            <person name="Erfle H."/>
            <person name="Jordan N."/>
            <person name="Bangert S."/>
            <person name="Wiedelmann R."/>
            <person name="Kranz H."/>
            <person name="Voss H."/>
            <person name="Holland R."/>
            <person name="Brandt P."/>
            <person name="Nyakatura G."/>
            <person name="Vezzi A."/>
            <person name="D'Angelo M."/>
            <person name="Pallavicini A."/>
            <person name="Toppo S."/>
            <person name="Simionati B."/>
            <person name="Conrad A."/>
            <person name="Hornischer K."/>
            <person name="Kauer G."/>
            <person name="Loehnert T.-H."/>
            <person name="Nordsiek G."/>
            <person name="Reichelt J."/>
            <person name="Scharfe M."/>
            <person name="Schoen O."/>
            <person name="Bargues M."/>
            <person name="Terol J."/>
            <person name="Climent J."/>
            <person name="Navarro P."/>
            <person name="Collado C."/>
            <person name="Perez-Perez A."/>
            <person name="Ottenwaelder B."/>
            <person name="Duchemin D."/>
            <person name="Cooke R."/>
            <person name="Laudie M."/>
            <person name="Berger-Llauro C."/>
            <person name="Purnelle B."/>
            <person name="Masuy D."/>
            <person name="de Haan M."/>
            <person name="Maarse A.C."/>
            <person name="Alcaraz J.-P."/>
            <person name="Cottet A."/>
            <person name="Casacuberta E."/>
            <person name="Monfort A."/>
            <person name="Argiriou A."/>
            <person name="Flores M."/>
            <person name="Liguori R."/>
            <person name="Vitale D."/>
            <person name="Mannhaupt G."/>
            <person name="Haase D."/>
            <person name="Schoof H."/>
            <person name="Rudd S."/>
            <person name="Zaccaria P."/>
            <person name="Mewes H.-W."/>
            <person name="Mayer K.F.X."/>
            <person name="Kaul S."/>
            <person name="Town C.D."/>
            <person name="Koo H.L."/>
            <person name="Tallon L.J."/>
            <person name="Jenkins J."/>
            <person name="Rooney T."/>
            <person name="Rizzo M."/>
            <person name="Walts A."/>
            <person name="Utterback T."/>
            <person name="Fujii C.Y."/>
            <person name="Shea T.P."/>
            <person name="Creasy T.H."/>
            <person name="Haas B."/>
            <person name="Maiti R."/>
            <person name="Wu D."/>
            <person name="Peterson J."/>
            <person name="Van Aken S."/>
            <person name="Pai G."/>
            <person name="Militscher J."/>
            <person name="Sellers P."/>
            <person name="Gill J.E."/>
            <person name="Feldblyum T.V."/>
            <person name="Preuss D."/>
            <person name="Lin X."/>
            <person name="Nierman W.C."/>
            <person name="Salzberg S.L."/>
            <person name="White O."/>
            <person name="Venter J.C."/>
            <person name="Fraser C.M."/>
            <person name="Kaneko T."/>
            <person name="Nakamura Y."/>
            <person name="Sato S."/>
            <person name="Kato T."/>
            <person name="Asamizu E."/>
            <person name="Sasamoto S."/>
            <person name="Kimura T."/>
            <person name="Idesawa K."/>
            <person name="Kawashima K."/>
            <person name="Kishida Y."/>
            <person name="Kiyokawa C."/>
            <person name="Kohara M."/>
            <person name="Matsumoto M."/>
            <person name="Matsuno A."/>
            <person name="Muraki A."/>
            <person name="Nakayama S."/>
            <person name="Nakazaki N."/>
            <person name="Shinpo S."/>
            <person name="Takeuchi C."/>
            <person name="Wada T."/>
            <person name="Watanabe A."/>
            <person name="Yamada M."/>
            <person name="Yasuda M."/>
            <person name="Tabata S."/>
        </authorList>
    </citation>
    <scope>NUCLEOTIDE SEQUENCE [LARGE SCALE GENOMIC DNA]</scope>
    <source>
        <strain>cv. Columbia</strain>
    </source>
</reference>
<reference key="2">
    <citation type="journal article" date="2017" name="Plant J.">
        <title>Araport11: a complete reannotation of the Arabidopsis thaliana reference genome.</title>
        <authorList>
            <person name="Cheng C.Y."/>
            <person name="Krishnakumar V."/>
            <person name="Chan A.P."/>
            <person name="Thibaud-Nissen F."/>
            <person name="Schobel S."/>
            <person name="Town C.D."/>
        </authorList>
    </citation>
    <scope>GENOME REANNOTATION</scope>
    <source>
        <strain>cv. Columbia</strain>
    </source>
</reference>
<reference key="3">
    <citation type="submission" date="2002-03" db="EMBL/GenBank/DDBJ databases">
        <title>Full-length cDNA from Arabidopsis thaliana.</title>
        <authorList>
            <person name="Brover V.V."/>
            <person name="Troukhan M.E."/>
            <person name="Alexandrov N.A."/>
            <person name="Lu Y.-P."/>
            <person name="Flavell R.B."/>
            <person name="Feldmann K.A."/>
        </authorList>
    </citation>
    <scope>NUCLEOTIDE SEQUENCE [LARGE SCALE MRNA]</scope>
</reference>
<reference key="4">
    <citation type="journal article" date="2002" name="Gene">
        <title>Analysis and expression of the class III peroxidase large gene family in Arabidopsis thaliana.</title>
        <authorList>
            <person name="Tognolli M."/>
            <person name="Penel C."/>
            <person name="Greppin H."/>
            <person name="Simon P."/>
        </authorList>
    </citation>
    <scope>GENE FAMILY ORGANIZATION</scope>
    <scope>NOMENCLATURE</scope>
    <source>
        <strain>cv. Columbia</strain>
    </source>
</reference>
<sequence length="321" mass="34537">MKIATFSVLLLLLFIFPVALAQLKFKFYSESCPNAETIVENLVRQQFARDPSITAALTRMHFHDCFVQGCDASLLIDPTTSQLSEKNAGPNFSVRGFELIDEIKTALEAQCPSTVSCSDIVTLATRDAVFLGGGPSYVVPTGRRDGFVSNPEDANEILPPPFISVEGMLSFFGNKGMNVFDSVALLGAHTVGIASCGNFVDRVTNFQGTGLPDPSMDPTLAGRLRNTCAVPGGFAALDQSMPVTPVSFDNLFFGQIRERKGILLIDQLIASDPATSGVVLQYASNNELFKRQFAIAMVKMGAVDVLTGSAGEIRTNCRAFN</sequence>
<evidence type="ECO:0000255" key="1"/>
<evidence type="ECO:0000255" key="2">
    <source>
        <dbReference type="PROSITE-ProRule" id="PRU00297"/>
    </source>
</evidence>
<evidence type="ECO:0000305" key="3"/>
<gene>
    <name type="primary">PER28</name>
    <name type="synonym">P28</name>
    <name type="ordered locus">At3g03670</name>
    <name type="ORF">T12J13.5</name>
</gene>
<comment type="function">
    <text>Removal of H(2)O(2), oxidation of toxic reductants, biosynthesis and degradation of lignin, suberization, auxin catabolism, response to environmental stresses such as wounding, pathogen attack and oxidative stress. These functions might be dependent on each isozyme/isoform in each plant tissue.</text>
</comment>
<comment type="catalytic activity">
    <reaction>
        <text>2 a phenolic donor + H2O2 = 2 a phenolic radical donor + 2 H2O</text>
        <dbReference type="Rhea" id="RHEA:56136"/>
        <dbReference type="ChEBI" id="CHEBI:15377"/>
        <dbReference type="ChEBI" id="CHEBI:16240"/>
        <dbReference type="ChEBI" id="CHEBI:139520"/>
        <dbReference type="ChEBI" id="CHEBI:139521"/>
        <dbReference type="EC" id="1.11.1.7"/>
    </reaction>
</comment>
<comment type="cofactor">
    <cofactor evidence="2">
        <name>heme b</name>
        <dbReference type="ChEBI" id="CHEBI:60344"/>
    </cofactor>
    <text evidence="2">Binds 1 heme b (iron(II)-protoporphyrin IX) group per subunit.</text>
</comment>
<comment type="cofactor">
    <cofactor evidence="2">
        <name>Ca(2+)</name>
        <dbReference type="ChEBI" id="CHEBI:29108"/>
    </cofactor>
    <text evidence="2">Binds 2 calcium ions per subunit.</text>
</comment>
<comment type="subcellular location">
    <subcellularLocation>
        <location evidence="2">Secreted</location>
    </subcellularLocation>
</comment>
<comment type="miscellaneous">
    <text>There are 73 peroxidase genes in A.thaliana.</text>
</comment>
<comment type="similarity">
    <text evidence="2">Belongs to the peroxidase family. Classical plant (class III) peroxidase subfamily.</text>
</comment>
<proteinExistence type="evidence at transcript level"/>